<comment type="function">
    <text evidence="2">NADH-dependent reductase for DPH3 and cytochrome b5. Required for the first step of diphthamide biosynthesis, a post-translational modification of histidine which occurs in elongation factor 2. DPH1 and DPH2 transfer a 3-amino-3-carboxypropyl (ACP) group from S-adenosyl-L-methionine (SAM) to a histidine residue, the reaction is assisted by a reduction system comprising DPH3 and a NADH-dependent reductase, predominantly CBR1. By reducing DPH3, also involved in the formation of the tRNA wobble base modification mcm5s 2U (5-methoxycarbonylmethyl-2-thiouridine), mediated by the elongator complex. The cytochrome b5/NADH cytochrome b5 reductase electron transfer system supports the catalytic activity of several sterol biosynthetic enzymes.</text>
</comment>
<comment type="catalytic activity">
    <reaction evidence="2">
        <text>2 Fe(III)-[cytochrome b5] + NADH = 2 Fe(II)-[cytochrome b5] + NAD(+) + H(+)</text>
        <dbReference type="Rhea" id="RHEA:46680"/>
        <dbReference type="Rhea" id="RHEA-COMP:10438"/>
        <dbReference type="Rhea" id="RHEA-COMP:10439"/>
        <dbReference type="ChEBI" id="CHEBI:15378"/>
        <dbReference type="ChEBI" id="CHEBI:29033"/>
        <dbReference type="ChEBI" id="CHEBI:29034"/>
        <dbReference type="ChEBI" id="CHEBI:57540"/>
        <dbReference type="ChEBI" id="CHEBI:57945"/>
        <dbReference type="EC" id="1.6.2.2"/>
    </reaction>
</comment>
<comment type="catalytic activity">
    <reaction evidence="2">
        <text>2 Fe(3+)-[Dph3] + NADH = 2 Fe(2+)-[Dph3] + NAD(+) + H(+)</text>
        <dbReference type="Rhea" id="RHEA:71231"/>
        <dbReference type="Rhea" id="RHEA-COMP:18002"/>
        <dbReference type="Rhea" id="RHEA-COMP:18003"/>
        <dbReference type="ChEBI" id="CHEBI:15378"/>
        <dbReference type="ChEBI" id="CHEBI:29033"/>
        <dbReference type="ChEBI" id="CHEBI:29034"/>
        <dbReference type="ChEBI" id="CHEBI:57540"/>
        <dbReference type="ChEBI" id="CHEBI:57945"/>
        <dbReference type="ChEBI" id="CHEBI:83228"/>
    </reaction>
    <physiologicalReaction direction="left-to-right" evidence="2">
        <dbReference type="Rhea" id="RHEA:71232"/>
    </physiologicalReaction>
</comment>
<comment type="cofactor">
    <cofactor evidence="3">
        <name>FAD</name>
        <dbReference type="ChEBI" id="CHEBI:57692"/>
    </cofactor>
</comment>
<comment type="pathway">
    <text evidence="2">Protein modification; peptidyl-diphthamide biosynthesis.</text>
</comment>
<comment type="subunit">
    <text evidence="2">Monomer. Component of the 2-(3-amino-3-carboxypropyl)histidine synthase complex composed of DPH1, DPH2, DPH3 and a NADH-dependent reductase, predominantly CBR1.</text>
</comment>
<comment type="subcellular location">
    <subcellularLocation>
        <location evidence="2">Mitochondrion outer membrane</location>
        <topology evidence="3">Single-pass membrane protein</topology>
    </subcellularLocation>
</comment>
<comment type="similarity">
    <text evidence="5">Belongs to the flavoprotein pyridine nucleotide cytochrome reductase family.</text>
</comment>
<evidence type="ECO:0000250" key="1"/>
<evidence type="ECO:0000250" key="2">
    <source>
        <dbReference type="UniProtKB" id="P38626"/>
    </source>
</evidence>
<evidence type="ECO:0000255" key="3"/>
<evidence type="ECO:0000255" key="4">
    <source>
        <dbReference type="PROSITE-ProRule" id="PRU00716"/>
    </source>
</evidence>
<evidence type="ECO:0000305" key="5"/>
<gene>
    <name type="primary">CBR1</name>
    <name type="ORF">MGG_06289</name>
</gene>
<feature type="chain" id="PRO_0000330157" description="NADH-cytochrome b5 reductase 1">
    <location>
        <begin position="1"/>
        <end position="309"/>
    </location>
</feature>
<feature type="transmembrane region" description="Helical" evidence="3">
    <location>
        <begin position="31"/>
        <end position="51"/>
    </location>
</feature>
<feature type="domain" description="FAD-binding FR-type" evidence="4">
    <location>
        <begin position="60"/>
        <end position="168"/>
    </location>
</feature>
<feature type="binding site" evidence="1">
    <location>
        <begin position="148"/>
        <end position="163"/>
    </location>
    <ligand>
        <name>FAD</name>
        <dbReference type="ChEBI" id="CHEBI:57692"/>
    </ligand>
</feature>
<feature type="binding site" evidence="1">
    <location>
        <begin position="174"/>
        <end position="208"/>
    </location>
    <ligand>
        <name>FAD</name>
        <dbReference type="ChEBI" id="CHEBI:57692"/>
    </ligand>
</feature>
<name>NCB5R_PYRO7</name>
<proteinExistence type="inferred from homology"/>
<sequence length="309" mass="33630">MAPPLSSKVYVDGVYIPAALIVIGTAIVKRDWVVYSVALALALGTWKFFQLKPKKVLDPTKFQEFELKEKTIISHNVAIYRIQLPSPSSILGLPIGQHISIGADIPQPDGSSKEVVRSYTPISGDEQPGYVDLLIKSYPTGNISKYMAGLSVGQSIRVRGPKGAFVYQPNMVRHFGMIAGGTGITPMLQVVRAIVRGRAAGDTTQVDLIFANVTKEDILLKEDLDALAAEDKGFRVHYVLDRPPEGWTGGVGFVTQDMITKWLPKPADDVKILLCGPPPMVSGLKKATEALGFKKARPVSKLEDQVFAF</sequence>
<dbReference type="EC" id="1.6.2.2" evidence="2"/>
<dbReference type="EMBL" id="CM001234">
    <property type="protein sequence ID" value="EHA50979.1"/>
    <property type="molecule type" value="Genomic_DNA"/>
</dbReference>
<dbReference type="RefSeq" id="XP_003717298.1">
    <property type="nucleotide sequence ID" value="XM_003717250.1"/>
</dbReference>
<dbReference type="SMR" id="A4R935"/>
<dbReference type="FunCoup" id="A4R935">
    <property type="interactions" value="268"/>
</dbReference>
<dbReference type="STRING" id="242507.A4R935"/>
<dbReference type="EnsemblFungi" id="MGG_06289T0">
    <property type="protein sequence ID" value="MGG_06289T0"/>
    <property type="gene ID" value="MGG_06289"/>
</dbReference>
<dbReference type="GeneID" id="2684444"/>
<dbReference type="KEGG" id="mgr:MGG_06289"/>
<dbReference type="VEuPathDB" id="FungiDB:MGG_06289"/>
<dbReference type="eggNOG" id="KOG0534">
    <property type="taxonomic scope" value="Eukaryota"/>
</dbReference>
<dbReference type="HOGENOM" id="CLU_003827_9_0_1"/>
<dbReference type="InParanoid" id="A4R935"/>
<dbReference type="OMA" id="KGRFSYK"/>
<dbReference type="OrthoDB" id="432685at2759"/>
<dbReference type="UniPathway" id="UPA00559"/>
<dbReference type="Proteomes" id="UP000009058">
    <property type="component" value="Chromosome 4"/>
</dbReference>
<dbReference type="GO" id="GO:0005783">
    <property type="term" value="C:endoplasmic reticulum"/>
    <property type="evidence" value="ECO:0007669"/>
    <property type="project" value="TreeGrafter"/>
</dbReference>
<dbReference type="GO" id="GO:0005741">
    <property type="term" value="C:mitochondrial outer membrane"/>
    <property type="evidence" value="ECO:0007669"/>
    <property type="project" value="UniProtKB-SubCell"/>
</dbReference>
<dbReference type="GO" id="GO:0004128">
    <property type="term" value="F:cytochrome-b5 reductase activity, acting on NAD(P)H"/>
    <property type="evidence" value="ECO:0000250"/>
    <property type="project" value="UniProtKB"/>
</dbReference>
<dbReference type="GO" id="GO:0003954">
    <property type="term" value="F:NADH dehydrogenase activity"/>
    <property type="evidence" value="ECO:0000250"/>
    <property type="project" value="UniProtKB"/>
</dbReference>
<dbReference type="GO" id="GO:0016740">
    <property type="term" value="F:transferase activity"/>
    <property type="evidence" value="ECO:0007669"/>
    <property type="project" value="UniProtKB-KW"/>
</dbReference>
<dbReference type="GO" id="GO:0017183">
    <property type="term" value="P:protein histidyl modification to diphthamide"/>
    <property type="evidence" value="ECO:0000250"/>
    <property type="project" value="UniProtKB"/>
</dbReference>
<dbReference type="GO" id="GO:0002926">
    <property type="term" value="P:tRNA wobble base 5-methoxycarbonylmethyl-2-thiouridinylation"/>
    <property type="evidence" value="ECO:0000250"/>
    <property type="project" value="UniProtKB"/>
</dbReference>
<dbReference type="CDD" id="cd06183">
    <property type="entry name" value="cyt_b5_reduct_like"/>
    <property type="match status" value="1"/>
</dbReference>
<dbReference type="FunFam" id="2.40.30.10:FF:000032">
    <property type="entry name" value="NADH-cytochrome b5 reductase"/>
    <property type="match status" value="1"/>
</dbReference>
<dbReference type="FunFam" id="3.40.50.80:FF:000019">
    <property type="entry name" value="NADH-cytochrome b5 reductase"/>
    <property type="match status" value="1"/>
</dbReference>
<dbReference type="Gene3D" id="3.40.50.80">
    <property type="entry name" value="Nucleotide-binding domain of ferredoxin-NADP reductase (FNR) module"/>
    <property type="match status" value="1"/>
</dbReference>
<dbReference type="Gene3D" id="2.40.30.10">
    <property type="entry name" value="Translation factors"/>
    <property type="match status" value="1"/>
</dbReference>
<dbReference type="InterPro" id="IPR001834">
    <property type="entry name" value="CBR-like"/>
</dbReference>
<dbReference type="InterPro" id="IPR008333">
    <property type="entry name" value="Cbr1-like_FAD-bd_dom"/>
</dbReference>
<dbReference type="InterPro" id="IPR017927">
    <property type="entry name" value="FAD-bd_FR_type"/>
</dbReference>
<dbReference type="InterPro" id="IPR001709">
    <property type="entry name" value="Flavoprot_Pyr_Nucl_cyt_Rdtase"/>
</dbReference>
<dbReference type="InterPro" id="IPR039261">
    <property type="entry name" value="FNR_nucleotide-bd"/>
</dbReference>
<dbReference type="InterPro" id="IPR001433">
    <property type="entry name" value="OxRdtase_FAD/NAD-bd"/>
</dbReference>
<dbReference type="InterPro" id="IPR017938">
    <property type="entry name" value="Riboflavin_synthase-like_b-brl"/>
</dbReference>
<dbReference type="PANTHER" id="PTHR19370">
    <property type="entry name" value="NADH-CYTOCHROME B5 REDUCTASE"/>
    <property type="match status" value="1"/>
</dbReference>
<dbReference type="PANTHER" id="PTHR19370:SF184">
    <property type="entry name" value="NADH-CYTOCHROME B5 REDUCTASE-LIKE"/>
    <property type="match status" value="1"/>
</dbReference>
<dbReference type="Pfam" id="PF00970">
    <property type="entry name" value="FAD_binding_6"/>
    <property type="match status" value="1"/>
</dbReference>
<dbReference type="Pfam" id="PF00175">
    <property type="entry name" value="NAD_binding_1"/>
    <property type="match status" value="1"/>
</dbReference>
<dbReference type="PRINTS" id="PR00406">
    <property type="entry name" value="CYTB5RDTASE"/>
</dbReference>
<dbReference type="PRINTS" id="PR00371">
    <property type="entry name" value="FPNCR"/>
</dbReference>
<dbReference type="SUPFAM" id="SSF52343">
    <property type="entry name" value="Ferredoxin reductase-like, C-terminal NADP-linked domain"/>
    <property type="match status" value="1"/>
</dbReference>
<dbReference type="SUPFAM" id="SSF63380">
    <property type="entry name" value="Riboflavin synthase domain-like"/>
    <property type="match status" value="1"/>
</dbReference>
<dbReference type="PROSITE" id="PS51384">
    <property type="entry name" value="FAD_FR"/>
    <property type="match status" value="1"/>
</dbReference>
<protein>
    <recommendedName>
        <fullName>NADH-cytochrome b5 reductase 1</fullName>
        <ecNumber evidence="2">1.6.2.2</ecNumber>
    </recommendedName>
    <alternativeName>
        <fullName>Microsomal cytochrome b reductase</fullName>
    </alternativeName>
</protein>
<reference key="1">
    <citation type="journal article" date="2005" name="Nature">
        <title>The genome sequence of the rice blast fungus Magnaporthe grisea.</title>
        <authorList>
            <person name="Dean R.A."/>
            <person name="Talbot N.J."/>
            <person name="Ebbole D.J."/>
            <person name="Farman M.L."/>
            <person name="Mitchell T.K."/>
            <person name="Orbach M.J."/>
            <person name="Thon M.R."/>
            <person name="Kulkarni R."/>
            <person name="Xu J.-R."/>
            <person name="Pan H."/>
            <person name="Read N.D."/>
            <person name="Lee Y.-H."/>
            <person name="Carbone I."/>
            <person name="Brown D."/>
            <person name="Oh Y.Y."/>
            <person name="Donofrio N."/>
            <person name="Jeong J.S."/>
            <person name="Soanes D.M."/>
            <person name="Djonovic S."/>
            <person name="Kolomiets E."/>
            <person name="Rehmeyer C."/>
            <person name="Li W."/>
            <person name="Harding M."/>
            <person name="Kim S."/>
            <person name="Lebrun M.-H."/>
            <person name="Bohnert H."/>
            <person name="Coughlan S."/>
            <person name="Butler J."/>
            <person name="Calvo S.E."/>
            <person name="Ma L.-J."/>
            <person name="Nicol R."/>
            <person name="Purcell S."/>
            <person name="Nusbaum C."/>
            <person name="Galagan J.E."/>
            <person name="Birren B.W."/>
        </authorList>
    </citation>
    <scope>NUCLEOTIDE SEQUENCE [LARGE SCALE GENOMIC DNA]</scope>
    <source>
        <strain>70-15 / ATCC MYA-4617 / FGSC 8958</strain>
    </source>
</reference>
<organism>
    <name type="scientific">Pyricularia oryzae (strain 70-15 / ATCC MYA-4617 / FGSC 8958)</name>
    <name type="common">Rice blast fungus</name>
    <name type="synonym">Magnaporthe oryzae</name>
    <dbReference type="NCBI Taxonomy" id="242507"/>
    <lineage>
        <taxon>Eukaryota</taxon>
        <taxon>Fungi</taxon>
        <taxon>Dikarya</taxon>
        <taxon>Ascomycota</taxon>
        <taxon>Pezizomycotina</taxon>
        <taxon>Sordariomycetes</taxon>
        <taxon>Sordariomycetidae</taxon>
        <taxon>Magnaporthales</taxon>
        <taxon>Pyriculariaceae</taxon>
        <taxon>Pyricularia</taxon>
    </lineage>
</organism>
<keyword id="KW-0274">FAD</keyword>
<keyword id="KW-0285">Flavoprotein</keyword>
<keyword id="KW-0472">Membrane</keyword>
<keyword id="KW-0496">Mitochondrion</keyword>
<keyword id="KW-1000">Mitochondrion outer membrane</keyword>
<keyword id="KW-0520">NAD</keyword>
<keyword id="KW-0560">Oxidoreductase</keyword>
<keyword id="KW-1185">Reference proteome</keyword>
<keyword id="KW-0808">Transferase</keyword>
<keyword id="KW-0812">Transmembrane</keyword>
<keyword id="KW-1133">Transmembrane helix</keyword>
<accession>A4R935</accession>
<accession>G4N878</accession>